<sequence>MQKELLEVFDNRFPDRDYTIEIVNPEFTSVCPITGLPDFGTITIRYIPDKVCVELKSLKYYYLEFRNAGIFYENVTNTILDHLVDLLKPRTLTVTTAWKARGGITETVTVSYSAGQDE</sequence>
<proteinExistence type="inferred from homology"/>
<accession>B3EMR0</accession>
<name>QUEF_CHLPB</name>
<gene>
    <name evidence="1" type="primary">queF</name>
    <name type="ordered locus">Cphamn1_0579</name>
</gene>
<dbReference type="EC" id="1.7.1.13" evidence="1"/>
<dbReference type="EMBL" id="CP001101">
    <property type="protein sequence ID" value="ACE03538.1"/>
    <property type="molecule type" value="Genomic_DNA"/>
</dbReference>
<dbReference type="SMR" id="B3EMR0"/>
<dbReference type="STRING" id="331678.Cphamn1_0579"/>
<dbReference type="KEGG" id="cpb:Cphamn1_0579"/>
<dbReference type="eggNOG" id="COG0780">
    <property type="taxonomic scope" value="Bacteria"/>
</dbReference>
<dbReference type="HOGENOM" id="CLU_102489_1_0_10"/>
<dbReference type="OrthoDB" id="9795077at2"/>
<dbReference type="UniPathway" id="UPA00392"/>
<dbReference type="GO" id="GO:0005737">
    <property type="term" value="C:cytoplasm"/>
    <property type="evidence" value="ECO:0007669"/>
    <property type="project" value="UniProtKB-SubCell"/>
</dbReference>
<dbReference type="GO" id="GO:0033739">
    <property type="term" value="F:preQ1 synthase activity"/>
    <property type="evidence" value="ECO:0007669"/>
    <property type="project" value="UniProtKB-UniRule"/>
</dbReference>
<dbReference type="GO" id="GO:0008616">
    <property type="term" value="P:queuosine biosynthetic process"/>
    <property type="evidence" value="ECO:0007669"/>
    <property type="project" value="UniProtKB-UniRule"/>
</dbReference>
<dbReference type="GO" id="GO:0006400">
    <property type="term" value="P:tRNA modification"/>
    <property type="evidence" value="ECO:0007669"/>
    <property type="project" value="UniProtKB-UniRule"/>
</dbReference>
<dbReference type="Gene3D" id="3.30.1130.10">
    <property type="match status" value="1"/>
</dbReference>
<dbReference type="HAMAP" id="MF_00818">
    <property type="entry name" value="QueF_type1"/>
    <property type="match status" value="1"/>
</dbReference>
<dbReference type="InterPro" id="IPR043133">
    <property type="entry name" value="GTP-CH-I_C/QueF"/>
</dbReference>
<dbReference type="InterPro" id="IPR050084">
    <property type="entry name" value="NADPH_dep_7-cyano-7-deazaG_red"/>
</dbReference>
<dbReference type="InterPro" id="IPR029500">
    <property type="entry name" value="QueF"/>
</dbReference>
<dbReference type="InterPro" id="IPR016856">
    <property type="entry name" value="QueF_type1"/>
</dbReference>
<dbReference type="NCBIfam" id="TIGR03139">
    <property type="entry name" value="QueF-II"/>
    <property type="match status" value="1"/>
</dbReference>
<dbReference type="PANTHER" id="PTHR34354">
    <property type="entry name" value="NADPH-DEPENDENT 7-CYANO-7-DEAZAGUANINE REDUCTASE"/>
    <property type="match status" value="1"/>
</dbReference>
<dbReference type="PANTHER" id="PTHR34354:SF1">
    <property type="entry name" value="NADPH-DEPENDENT 7-CYANO-7-DEAZAGUANINE REDUCTASE"/>
    <property type="match status" value="1"/>
</dbReference>
<dbReference type="Pfam" id="PF14489">
    <property type="entry name" value="QueF"/>
    <property type="match status" value="1"/>
</dbReference>
<dbReference type="PIRSF" id="PIRSF027377">
    <property type="entry name" value="Nitrile_oxidored_QueF"/>
    <property type="match status" value="1"/>
</dbReference>
<dbReference type="SUPFAM" id="SSF55620">
    <property type="entry name" value="Tetrahydrobiopterin biosynthesis enzymes-like"/>
    <property type="match status" value="1"/>
</dbReference>
<feature type="chain" id="PRO_1000134299" description="NADPH-dependent 7-cyano-7-deazaguanine reductase">
    <location>
        <begin position="1"/>
        <end position="118"/>
    </location>
</feature>
<feature type="active site" description="Thioimide intermediate" evidence="1">
    <location>
        <position position="31"/>
    </location>
</feature>
<feature type="active site" description="Proton donor" evidence="1">
    <location>
        <position position="38"/>
    </location>
</feature>
<feature type="binding site" evidence="1">
    <location>
        <begin position="53"/>
        <end position="55"/>
    </location>
    <ligand>
        <name>substrate</name>
    </ligand>
</feature>
<feature type="binding site" evidence="1">
    <location>
        <begin position="72"/>
        <end position="73"/>
    </location>
    <ligand>
        <name>substrate</name>
    </ligand>
</feature>
<reference key="1">
    <citation type="submission" date="2008-06" db="EMBL/GenBank/DDBJ databases">
        <title>Complete sequence of Chlorobium phaeobacteroides BS1.</title>
        <authorList>
            <consortium name="US DOE Joint Genome Institute"/>
            <person name="Lucas S."/>
            <person name="Copeland A."/>
            <person name="Lapidus A."/>
            <person name="Glavina del Rio T."/>
            <person name="Dalin E."/>
            <person name="Tice H."/>
            <person name="Bruce D."/>
            <person name="Goodwin L."/>
            <person name="Pitluck S."/>
            <person name="Schmutz J."/>
            <person name="Larimer F."/>
            <person name="Land M."/>
            <person name="Hauser L."/>
            <person name="Kyrpides N."/>
            <person name="Ovchinnikova G."/>
            <person name="Li T."/>
            <person name="Liu Z."/>
            <person name="Zhao F."/>
            <person name="Overmann J."/>
            <person name="Bryant D.A."/>
            <person name="Richardson P."/>
        </authorList>
    </citation>
    <scope>NUCLEOTIDE SEQUENCE [LARGE SCALE GENOMIC DNA]</scope>
    <source>
        <strain>BS1</strain>
    </source>
</reference>
<organism>
    <name type="scientific">Chlorobium phaeobacteroides (strain BS1)</name>
    <dbReference type="NCBI Taxonomy" id="331678"/>
    <lineage>
        <taxon>Bacteria</taxon>
        <taxon>Pseudomonadati</taxon>
        <taxon>Chlorobiota</taxon>
        <taxon>Chlorobiia</taxon>
        <taxon>Chlorobiales</taxon>
        <taxon>Chlorobiaceae</taxon>
        <taxon>Chlorobium/Pelodictyon group</taxon>
        <taxon>Chlorobium</taxon>
    </lineage>
</organism>
<keyword id="KW-0963">Cytoplasm</keyword>
<keyword id="KW-0521">NADP</keyword>
<keyword id="KW-0560">Oxidoreductase</keyword>
<keyword id="KW-0671">Queuosine biosynthesis</keyword>
<evidence type="ECO:0000255" key="1">
    <source>
        <dbReference type="HAMAP-Rule" id="MF_00818"/>
    </source>
</evidence>
<protein>
    <recommendedName>
        <fullName evidence="1">NADPH-dependent 7-cyano-7-deazaguanine reductase</fullName>
        <ecNumber evidence="1">1.7.1.13</ecNumber>
    </recommendedName>
    <alternativeName>
        <fullName evidence="1">7-cyano-7-carbaguanine reductase</fullName>
    </alternativeName>
    <alternativeName>
        <fullName evidence="1">NADPH-dependent nitrile oxidoreductase</fullName>
    </alternativeName>
    <alternativeName>
        <fullName evidence="1">PreQ(0) reductase</fullName>
    </alternativeName>
</protein>
<comment type="function">
    <text evidence="1">Catalyzes the NADPH-dependent reduction of 7-cyano-7-deazaguanine (preQ0) to 7-aminomethyl-7-deazaguanine (preQ1).</text>
</comment>
<comment type="catalytic activity">
    <reaction evidence="1">
        <text>7-aminomethyl-7-carbaguanine + 2 NADP(+) = 7-cyano-7-deazaguanine + 2 NADPH + 3 H(+)</text>
        <dbReference type="Rhea" id="RHEA:13409"/>
        <dbReference type="ChEBI" id="CHEBI:15378"/>
        <dbReference type="ChEBI" id="CHEBI:45075"/>
        <dbReference type="ChEBI" id="CHEBI:57783"/>
        <dbReference type="ChEBI" id="CHEBI:58349"/>
        <dbReference type="ChEBI" id="CHEBI:58703"/>
        <dbReference type="EC" id="1.7.1.13"/>
    </reaction>
</comment>
<comment type="pathway">
    <text evidence="1">tRNA modification; tRNA-queuosine biosynthesis.</text>
</comment>
<comment type="subcellular location">
    <subcellularLocation>
        <location evidence="1">Cytoplasm</location>
    </subcellularLocation>
</comment>
<comment type="similarity">
    <text evidence="1">Belongs to the GTP cyclohydrolase I family. QueF type 1 subfamily.</text>
</comment>